<sequence length="279" mass="30484">MKTKLDFFKMKEQNEPIVMLTAYDYPSAKQAEKAEVDMILVGDSLGMVVLGLDSTIQVTIDDMIHHTKAVKRGAKDTFIVTDMPFMSYHYSLAETLKNAARIMQESGADALKLEGGDGVFESIQALTRGGIPVVSHLGLTPQSVGVLGGYKVQGKDHESAQKLIEDSLKCEEAGAIALVLECVPGELTKRITDMLKIPVIGIGAGAEADGQVLVYHDVVGYGVSRTPKFVKQYAQIDTLLEEALIQYTKEVKAHTFPEDKHTFHIKEEVLDGLYGGIKK</sequence>
<comment type="function">
    <text evidence="1">Catalyzes the reversible reaction in which hydroxymethyl group from 5,10-methylenetetrahydrofolate is transferred onto alpha-ketoisovalerate to form ketopantoate.</text>
</comment>
<comment type="catalytic activity">
    <reaction evidence="1">
        <text>3-methyl-2-oxobutanoate + (6R)-5,10-methylene-5,6,7,8-tetrahydrofolate + H2O = 2-dehydropantoate + (6S)-5,6,7,8-tetrahydrofolate</text>
        <dbReference type="Rhea" id="RHEA:11824"/>
        <dbReference type="ChEBI" id="CHEBI:11561"/>
        <dbReference type="ChEBI" id="CHEBI:11851"/>
        <dbReference type="ChEBI" id="CHEBI:15377"/>
        <dbReference type="ChEBI" id="CHEBI:15636"/>
        <dbReference type="ChEBI" id="CHEBI:57453"/>
        <dbReference type="EC" id="2.1.2.11"/>
    </reaction>
</comment>
<comment type="cofactor">
    <cofactor evidence="1">
        <name>Mg(2+)</name>
        <dbReference type="ChEBI" id="CHEBI:18420"/>
    </cofactor>
    <text evidence="1">Binds 1 Mg(2+) ion per subunit.</text>
</comment>
<comment type="pathway">
    <text evidence="1">Cofactor biosynthesis; (R)-pantothenate biosynthesis; (R)-pantoate from 3-methyl-2-oxobutanoate: step 1/2.</text>
</comment>
<comment type="subunit">
    <text evidence="1">Homodecamer; pentamer of dimers.</text>
</comment>
<comment type="subcellular location">
    <subcellularLocation>
        <location evidence="1">Cytoplasm</location>
    </subcellularLocation>
</comment>
<comment type="similarity">
    <text evidence="1">Belongs to the PanB family.</text>
</comment>
<dbReference type="EC" id="2.1.2.11" evidence="1"/>
<dbReference type="EMBL" id="CP000813">
    <property type="protein sequence ID" value="ABV62644.1"/>
    <property type="molecule type" value="Genomic_DNA"/>
</dbReference>
<dbReference type="RefSeq" id="WP_012010358.1">
    <property type="nucleotide sequence ID" value="NZ_VEIS01000015.1"/>
</dbReference>
<dbReference type="SMR" id="A8FEH7"/>
<dbReference type="STRING" id="315750.BPUM_1974"/>
<dbReference type="GeneID" id="5621240"/>
<dbReference type="KEGG" id="bpu:BPUM_1974"/>
<dbReference type="eggNOG" id="COG0413">
    <property type="taxonomic scope" value="Bacteria"/>
</dbReference>
<dbReference type="HOGENOM" id="CLU_036645_1_0_9"/>
<dbReference type="OrthoDB" id="9781789at2"/>
<dbReference type="UniPathway" id="UPA00028">
    <property type="reaction ID" value="UER00003"/>
</dbReference>
<dbReference type="Proteomes" id="UP000001355">
    <property type="component" value="Chromosome"/>
</dbReference>
<dbReference type="GO" id="GO:0005737">
    <property type="term" value="C:cytoplasm"/>
    <property type="evidence" value="ECO:0007669"/>
    <property type="project" value="UniProtKB-SubCell"/>
</dbReference>
<dbReference type="GO" id="GO:0003864">
    <property type="term" value="F:3-methyl-2-oxobutanoate hydroxymethyltransferase activity"/>
    <property type="evidence" value="ECO:0007669"/>
    <property type="project" value="UniProtKB-UniRule"/>
</dbReference>
<dbReference type="GO" id="GO:0000287">
    <property type="term" value="F:magnesium ion binding"/>
    <property type="evidence" value="ECO:0007669"/>
    <property type="project" value="TreeGrafter"/>
</dbReference>
<dbReference type="GO" id="GO:0015940">
    <property type="term" value="P:pantothenate biosynthetic process"/>
    <property type="evidence" value="ECO:0007669"/>
    <property type="project" value="UniProtKB-UniRule"/>
</dbReference>
<dbReference type="CDD" id="cd06557">
    <property type="entry name" value="KPHMT-like"/>
    <property type="match status" value="1"/>
</dbReference>
<dbReference type="FunFam" id="3.20.20.60:FF:000003">
    <property type="entry name" value="3-methyl-2-oxobutanoate hydroxymethyltransferase"/>
    <property type="match status" value="1"/>
</dbReference>
<dbReference type="Gene3D" id="3.20.20.60">
    <property type="entry name" value="Phosphoenolpyruvate-binding domains"/>
    <property type="match status" value="1"/>
</dbReference>
<dbReference type="HAMAP" id="MF_00156">
    <property type="entry name" value="PanB"/>
    <property type="match status" value="1"/>
</dbReference>
<dbReference type="InterPro" id="IPR003700">
    <property type="entry name" value="Pantoate_hydroxy_MeTrfase"/>
</dbReference>
<dbReference type="InterPro" id="IPR015813">
    <property type="entry name" value="Pyrv/PenolPyrv_kinase-like_dom"/>
</dbReference>
<dbReference type="InterPro" id="IPR040442">
    <property type="entry name" value="Pyrv_kinase-like_dom_sf"/>
</dbReference>
<dbReference type="NCBIfam" id="TIGR00222">
    <property type="entry name" value="panB"/>
    <property type="match status" value="1"/>
</dbReference>
<dbReference type="NCBIfam" id="NF001452">
    <property type="entry name" value="PRK00311.1"/>
    <property type="match status" value="1"/>
</dbReference>
<dbReference type="PANTHER" id="PTHR20881">
    <property type="entry name" value="3-METHYL-2-OXOBUTANOATE HYDROXYMETHYLTRANSFERASE"/>
    <property type="match status" value="1"/>
</dbReference>
<dbReference type="PANTHER" id="PTHR20881:SF0">
    <property type="entry name" value="3-METHYL-2-OXOBUTANOATE HYDROXYMETHYLTRANSFERASE"/>
    <property type="match status" value="1"/>
</dbReference>
<dbReference type="Pfam" id="PF02548">
    <property type="entry name" value="Pantoate_transf"/>
    <property type="match status" value="1"/>
</dbReference>
<dbReference type="PIRSF" id="PIRSF000388">
    <property type="entry name" value="Pantoate_hydroxy_MeTrfase"/>
    <property type="match status" value="1"/>
</dbReference>
<dbReference type="SUPFAM" id="SSF51621">
    <property type="entry name" value="Phosphoenolpyruvate/pyruvate domain"/>
    <property type="match status" value="1"/>
</dbReference>
<evidence type="ECO:0000255" key="1">
    <source>
        <dbReference type="HAMAP-Rule" id="MF_00156"/>
    </source>
</evidence>
<organism>
    <name type="scientific">Bacillus pumilus (strain SAFR-032)</name>
    <dbReference type="NCBI Taxonomy" id="315750"/>
    <lineage>
        <taxon>Bacteria</taxon>
        <taxon>Bacillati</taxon>
        <taxon>Bacillota</taxon>
        <taxon>Bacilli</taxon>
        <taxon>Bacillales</taxon>
        <taxon>Bacillaceae</taxon>
        <taxon>Bacillus</taxon>
    </lineage>
</organism>
<feature type="chain" id="PRO_1000058181" description="3-methyl-2-oxobutanoate hydroxymethyltransferase">
    <location>
        <begin position="1"/>
        <end position="279"/>
    </location>
</feature>
<feature type="active site" description="Proton acceptor" evidence="1">
    <location>
        <position position="181"/>
    </location>
</feature>
<feature type="binding site" evidence="1">
    <location>
        <begin position="43"/>
        <end position="44"/>
    </location>
    <ligand>
        <name>3-methyl-2-oxobutanoate</name>
        <dbReference type="ChEBI" id="CHEBI:11851"/>
    </ligand>
</feature>
<feature type="binding site" evidence="1">
    <location>
        <position position="43"/>
    </location>
    <ligand>
        <name>Mg(2+)</name>
        <dbReference type="ChEBI" id="CHEBI:18420"/>
    </ligand>
</feature>
<feature type="binding site" evidence="1">
    <location>
        <position position="82"/>
    </location>
    <ligand>
        <name>3-methyl-2-oxobutanoate</name>
        <dbReference type="ChEBI" id="CHEBI:11851"/>
    </ligand>
</feature>
<feature type="binding site" evidence="1">
    <location>
        <position position="82"/>
    </location>
    <ligand>
        <name>Mg(2+)</name>
        <dbReference type="ChEBI" id="CHEBI:18420"/>
    </ligand>
</feature>
<feature type="binding site" evidence="1">
    <location>
        <position position="112"/>
    </location>
    <ligand>
        <name>3-methyl-2-oxobutanoate</name>
        <dbReference type="ChEBI" id="CHEBI:11851"/>
    </ligand>
</feature>
<feature type="binding site" evidence="1">
    <location>
        <position position="114"/>
    </location>
    <ligand>
        <name>Mg(2+)</name>
        <dbReference type="ChEBI" id="CHEBI:18420"/>
    </ligand>
</feature>
<gene>
    <name evidence="1" type="primary">panB</name>
    <name type="ordered locus">BPUM_1974</name>
</gene>
<reference key="1">
    <citation type="journal article" date="2007" name="PLoS ONE">
        <title>Paradoxical DNA repair and peroxide resistance gene conservation in Bacillus pumilus SAFR-032.</title>
        <authorList>
            <person name="Gioia J."/>
            <person name="Yerrapragada S."/>
            <person name="Qin X."/>
            <person name="Jiang H."/>
            <person name="Igboeli O.C."/>
            <person name="Muzny D."/>
            <person name="Dugan-Rocha S."/>
            <person name="Ding Y."/>
            <person name="Hawes A."/>
            <person name="Liu W."/>
            <person name="Perez L."/>
            <person name="Kovar C."/>
            <person name="Dinh H."/>
            <person name="Lee S."/>
            <person name="Nazareth L."/>
            <person name="Blyth P."/>
            <person name="Holder M."/>
            <person name="Buhay C."/>
            <person name="Tirumalai M.R."/>
            <person name="Liu Y."/>
            <person name="Dasgupta I."/>
            <person name="Bokhetache L."/>
            <person name="Fujita M."/>
            <person name="Karouia F."/>
            <person name="Eswara Moorthy P."/>
            <person name="Siefert J."/>
            <person name="Uzman A."/>
            <person name="Buzumbo P."/>
            <person name="Verma A."/>
            <person name="Zwiya H."/>
            <person name="McWilliams B.D."/>
            <person name="Olowu A."/>
            <person name="Clinkenbeard K.D."/>
            <person name="Newcombe D."/>
            <person name="Golebiewski L."/>
            <person name="Petrosino J.F."/>
            <person name="Nicholson W.L."/>
            <person name="Fox G.E."/>
            <person name="Venkateswaran K."/>
            <person name="Highlander S.K."/>
            <person name="Weinstock G.M."/>
        </authorList>
    </citation>
    <scope>NUCLEOTIDE SEQUENCE [LARGE SCALE GENOMIC DNA]</scope>
    <source>
        <strain>SAFR-032</strain>
    </source>
</reference>
<accession>A8FEH7</accession>
<name>PANB_BACP2</name>
<keyword id="KW-0963">Cytoplasm</keyword>
<keyword id="KW-0460">Magnesium</keyword>
<keyword id="KW-0479">Metal-binding</keyword>
<keyword id="KW-0566">Pantothenate biosynthesis</keyword>
<keyword id="KW-0808">Transferase</keyword>
<protein>
    <recommendedName>
        <fullName evidence="1">3-methyl-2-oxobutanoate hydroxymethyltransferase</fullName>
        <ecNumber evidence="1">2.1.2.11</ecNumber>
    </recommendedName>
    <alternativeName>
        <fullName evidence="1">Ketopantoate hydroxymethyltransferase</fullName>
        <shortName evidence="1">KPHMT</shortName>
    </alternativeName>
</protein>
<proteinExistence type="inferred from homology"/>